<dbReference type="EC" id="5.1.1.7" evidence="1"/>
<dbReference type="EMBL" id="BX936398">
    <property type="protein sequence ID" value="CAH19430.1"/>
    <property type="molecule type" value="Genomic_DNA"/>
</dbReference>
<dbReference type="RefSeq" id="WP_002211471.1">
    <property type="nucleotide sequence ID" value="NZ_CP009712.1"/>
</dbReference>
<dbReference type="SMR" id="Q66FZ5"/>
<dbReference type="GeneID" id="57974864"/>
<dbReference type="KEGG" id="ypo:BZ17_2393"/>
<dbReference type="KEGG" id="yps:YPTB0190"/>
<dbReference type="PATRIC" id="fig|273123.14.peg.2517"/>
<dbReference type="UniPathway" id="UPA00034">
    <property type="reaction ID" value="UER00025"/>
</dbReference>
<dbReference type="Proteomes" id="UP000001011">
    <property type="component" value="Chromosome"/>
</dbReference>
<dbReference type="GO" id="GO:0005829">
    <property type="term" value="C:cytosol"/>
    <property type="evidence" value="ECO:0007669"/>
    <property type="project" value="TreeGrafter"/>
</dbReference>
<dbReference type="GO" id="GO:0008837">
    <property type="term" value="F:diaminopimelate epimerase activity"/>
    <property type="evidence" value="ECO:0007669"/>
    <property type="project" value="UniProtKB-UniRule"/>
</dbReference>
<dbReference type="GO" id="GO:0009089">
    <property type="term" value="P:lysine biosynthetic process via diaminopimelate"/>
    <property type="evidence" value="ECO:0007669"/>
    <property type="project" value="UniProtKB-UniRule"/>
</dbReference>
<dbReference type="FunFam" id="3.10.310.10:FF:000001">
    <property type="entry name" value="Diaminopimelate epimerase"/>
    <property type="match status" value="1"/>
</dbReference>
<dbReference type="FunFam" id="3.10.310.10:FF:000002">
    <property type="entry name" value="Diaminopimelate epimerase"/>
    <property type="match status" value="1"/>
</dbReference>
<dbReference type="Gene3D" id="3.10.310.10">
    <property type="entry name" value="Diaminopimelate Epimerase, Chain A, domain 1"/>
    <property type="match status" value="2"/>
</dbReference>
<dbReference type="HAMAP" id="MF_00197">
    <property type="entry name" value="DAP_epimerase"/>
    <property type="match status" value="1"/>
</dbReference>
<dbReference type="InterPro" id="IPR018510">
    <property type="entry name" value="DAP_epimerase_AS"/>
</dbReference>
<dbReference type="InterPro" id="IPR001653">
    <property type="entry name" value="DAP_epimerase_DapF"/>
</dbReference>
<dbReference type="NCBIfam" id="TIGR00652">
    <property type="entry name" value="DapF"/>
    <property type="match status" value="1"/>
</dbReference>
<dbReference type="PANTHER" id="PTHR31689:SF0">
    <property type="entry name" value="DIAMINOPIMELATE EPIMERASE"/>
    <property type="match status" value="1"/>
</dbReference>
<dbReference type="PANTHER" id="PTHR31689">
    <property type="entry name" value="DIAMINOPIMELATE EPIMERASE, CHLOROPLASTIC"/>
    <property type="match status" value="1"/>
</dbReference>
<dbReference type="Pfam" id="PF01678">
    <property type="entry name" value="DAP_epimerase"/>
    <property type="match status" value="2"/>
</dbReference>
<dbReference type="SUPFAM" id="SSF54506">
    <property type="entry name" value="Diaminopimelate epimerase-like"/>
    <property type="match status" value="1"/>
</dbReference>
<dbReference type="PROSITE" id="PS01326">
    <property type="entry name" value="DAP_EPIMERASE"/>
    <property type="match status" value="1"/>
</dbReference>
<proteinExistence type="inferred from homology"/>
<sequence>MQFSKMHGLGNDFMVVDAVTQNVYFSPELIRRLADRHTGVGFDQMLVVEPPYDPELDFHYRIFNADGSEVSQCGNGARCFARFVRLKGLTNKREISVSTQTGRMILSVTEDEQVCVNMGEPDFEPQTVPFRAAKAEKTYILRAAEHTVLCGVVSMGNPHCVMQVDDVSVANVALLGPVLENHERFPERANIGFMQVVSRDHIRLRVYERGAGETQACGSGACAAVAVGVVQDLLNENVHVELPGGSLHIRWQGPGHPLYMTGPATHVYDGFIHL</sequence>
<evidence type="ECO:0000255" key="1">
    <source>
        <dbReference type="HAMAP-Rule" id="MF_00197"/>
    </source>
</evidence>
<keyword id="KW-0028">Amino-acid biosynthesis</keyword>
<keyword id="KW-0963">Cytoplasm</keyword>
<keyword id="KW-0413">Isomerase</keyword>
<keyword id="KW-0457">Lysine biosynthesis</keyword>
<protein>
    <recommendedName>
        <fullName evidence="1">Diaminopimelate epimerase</fullName>
        <shortName evidence="1">DAP epimerase</shortName>
        <ecNumber evidence="1">5.1.1.7</ecNumber>
    </recommendedName>
    <alternativeName>
        <fullName evidence="1">PLP-independent amino acid racemase</fullName>
    </alternativeName>
</protein>
<reference key="1">
    <citation type="journal article" date="2004" name="Proc. Natl. Acad. Sci. U.S.A.">
        <title>Insights into the evolution of Yersinia pestis through whole-genome comparison with Yersinia pseudotuberculosis.</title>
        <authorList>
            <person name="Chain P.S.G."/>
            <person name="Carniel E."/>
            <person name="Larimer F.W."/>
            <person name="Lamerdin J."/>
            <person name="Stoutland P.O."/>
            <person name="Regala W.M."/>
            <person name="Georgescu A.M."/>
            <person name="Vergez L.M."/>
            <person name="Land M.L."/>
            <person name="Motin V.L."/>
            <person name="Brubaker R.R."/>
            <person name="Fowler J."/>
            <person name="Hinnebusch J."/>
            <person name="Marceau M."/>
            <person name="Medigue C."/>
            <person name="Simonet M."/>
            <person name="Chenal-Francisque V."/>
            <person name="Souza B."/>
            <person name="Dacheux D."/>
            <person name="Elliott J.M."/>
            <person name="Derbise A."/>
            <person name="Hauser L.J."/>
            <person name="Garcia E."/>
        </authorList>
    </citation>
    <scope>NUCLEOTIDE SEQUENCE [LARGE SCALE GENOMIC DNA]</scope>
    <source>
        <strain>IP32953</strain>
    </source>
</reference>
<gene>
    <name evidence="1" type="primary">dapF</name>
    <name type="ordered locus">YPTB0190</name>
</gene>
<organism>
    <name type="scientific">Yersinia pseudotuberculosis serotype I (strain IP32953)</name>
    <dbReference type="NCBI Taxonomy" id="273123"/>
    <lineage>
        <taxon>Bacteria</taxon>
        <taxon>Pseudomonadati</taxon>
        <taxon>Pseudomonadota</taxon>
        <taxon>Gammaproteobacteria</taxon>
        <taxon>Enterobacterales</taxon>
        <taxon>Yersiniaceae</taxon>
        <taxon>Yersinia</taxon>
    </lineage>
</organism>
<name>DAPF_YERPS</name>
<feature type="chain" id="PRO_1000011990" description="Diaminopimelate epimerase">
    <location>
        <begin position="1"/>
        <end position="274"/>
    </location>
</feature>
<feature type="active site" description="Proton donor" evidence="1">
    <location>
        <position position="73"/>
    </location>
</feature>
<feature type="active site" description="Proton acceptor" evidence="1">
    <location>
        <position position="217"/>
    </location>
</feature>
<feature type="binding site" evidence="1">
    <location>
        <position position="11"/>
    </location>
    <ligand>
        <name>substrate</name>
    </ligand>
</feature>
<feature type="binding site" evidence="1">
    <location>
        <position position="44"/>
    </location>
    <ligand>
        <name>substrate</name>
    </ligand>
</feature>
<feature type="binding site" evidence="1">
    <location>
        <position position="64"/>
    </location>
    <ligand>
        <name>substrate</name>
    </ligand>
</feature>
<feature type="binding site" evidence="1">
    <location>
        <begin position="74"/>
        <end position="75"/>
    </location>
    <ligand>
        <name>substrate</name>
    </ligand>
</feature>
<feature type="binding site" evidence="1">
    <location>
        <position position="157"/>
    </location>
    <ligand>
        <name>substrate</name>
    </ligand>
</feature>
<feature type="binding site" evidence="1">
    <location>
        <position position="190"/>
    </location>
    <ligand>
        <name>substrate</name>
    </ligand>
</feature>
<feature type="binding site" evidence="1">
    <location>
        <begin position="208"/>
        <end position="209"/>
    </location>
    <ligand>
        <name>substrate</name>
    </ligand>
</feature>
<feature type="binding site" evidence="1">
    <location>
        <begin position="218"/>
        <end position="219"/>
    </location>
    <ligand>
        <name>substrate</name>
    </ligand>
</feature>
<feature type="site" description="Could be important to modulate the pK values of the two catalytic cysteine residues" evidence="1">
    <location>
        <position position="159"/>
    </location>
</feature>
<feature type="site" description="Could be important to modulate the pK values of the two catalytic cysteine residues" evidence="1">
    <location>
        <position position="208"/>
    </location>
</feature>
<feature type="site" description="Important for dimerization" evidence="1">
    <location>
        <position position="268"/>
    </location>
</feature>
<comment type="function">
    <text evidence="1">Catalyzes the stereoinversion of LL-2,6-diaminopimelate (L,L-DAP) to meso-diaminopimelate (meso-DAP), a precursor of L-lysine and an essential component of the bacterial peptidoglycan.</text>
</comment>
<comment type="catalytic activity">
    <reaction evidence="1">
        <text>(2S,6S)-2,6-diaminopimelate = meso-2,6-diaminopimelate</text>
        <dbReference type="Rhea" id="RHEA:15393"/>
        <dbReference type="ChEBI" id="CHEBI:57609"/>
        <dbReference type="ChEBI" id="CHEBI:57791"/>
        <dbReference type="EC" id="5.1.1.7"/>
    </reaction>
</comment>
<comment type="pathway">
    <text evidence="1">Amino-acid biosynthesis; L-lysine biosynthesis via DAP pathway; DL-2,6-diaminopimelate from LL-2,6-diaminopimelate: step 1/1.</text>
</comment>
<comment type="subunit">
    <text evidence="1">Homodimer.</text>
</comment>
<comment type="subcellular location">
    <subcellularLocation>
        <location evidence="1">Cytoplasm</location>
    </subcellularLocation>
</comment>
<comment type="similarity">
    <text evidence="1">Belongs to the diaminopimelate epimerase family.</text>
</comment>
<accession>Q66FZ5</accession>